<name>KGUA_HELPJ</name>
<sequence length="206" mass="23793">MNNDFNLLILSGPSGAGKSTLTKYLQEKIPKTHFSLSTTTRKPREGEVDGLHYNFVSEEEFKQGIEKGQFLEWAIVHNHYYGTSKIPVEKALKEGKIVIFDIDVQGHEILKKHYPNACSVFISTKNQEILKERLLLRGTDSKETIEKRLINAYKEMQCLESFDYLIINEDLEKSKEIILSIAKTLVHRLKAFNFEKICKAWKNESL</sequence>
<evidence type="ECO:0000250" key="1"/>
<evidence type="ECO:0000305" key="2"/>
<proteinExistence type="inferred from homology"/>
<reference key="1">
    <citation type="journal article" date="1999" name="Nature">
        <title>Genomic sequence comparison of two unrelated isolates of the human gastric pathogen Helicobacter pylori.</title>
        <authorList>
            <person name="Alm R.A."/>
            <person name="Ling L.-S.L."/>
            <person name="Moir D.T."/>
            <person name="King B.L."/>
            <person name="Brown E.D."/>
            <person name="Doig P.C."/>
            <person name="Smith D.R."/>
            <person name="Noonan B."/>
            <person name="Guild B.C."/>
            <person name="deJonge B.L."/>
            <person name="Carmel G."/>
            <person name="Tummino P.J."/>
            <person name="Caruso A."/>
            <person name="Uria-Nickelsen M."/>
            <person name="Mills D.M."/>
            <person name="Ives C."/>
            <person name="Gibson R."/>
            <person name="Merberg D."/>
            <person name="Mills S.D."/>
            <person name="Jiang Q."/>
            <person name="Taylor D.E."/>
            <person name="Vovis G.F."/>
            <person name="Trust T.J."/>
        </authorList>
    </citation>
    <scope>NUCLEOTIDE SEQUENCE [LARGE SCALE GENOMIC DNA]</scope>
    <source>
        <strain>J99 / ATCC 700824</strain>
    </source>
</reference>
<protein>
    <recommendedName>
        <fullName>Guanylate kinase</fullName>
        <ecNumber>2.7.4.8</ecNumber>
    </recommendedName>
    <alternativeName>
        <fullName>GMP kinase</fullName>
    </alternativeName>
</protein>
<dbReference type="EC" id="2.7.4.8"/>
<dbReference type="EMBL" id="AE001439">
    <property type="protein sequence ID" value="AAD05889.1"/>
    <property type="molecule type" value="Genomic_DNA"/>
</dbReference>
<dbReference type="PIR" id="B71948">
    <property type="entry name" value="B71948"/>
</dbReference>
<dbReference type="RefSeq" id="WP_001058030.1">
    <property type="nucleotide sequence ID" value="NZ_CP011330.1"/>
</dbReference>
<dbReference type="SMR" id="Q9ZMB7"/>
<dbReference type="KEGG" id="hpj:jhp_0304"/>
<dbReference type="PATRIC" id="fig|85963.30.peg.709"/>
<dbReference type="eggNOG" id="COG0194">
    <property type="taxonomic scope" value="Bacteria"/>
</dbReference>
<dbReference type="Proteomes" id="UP000000804">
    <property type="component" value="Chromosome"/>
</dbReference>
<dbReference type="GO" id="GO:0005829">
    <property type="term" value="C:cytosol"/>
    <property type="evidence" value="ECO:0007669"/>
    <property type="project" value="TreeGrafter"/>
</dbReference>
<dbReference type="GO" id="GO:0005524">
    <property type="term" value="F:ATP binding"/>
    <property type="evidence" value="ECO:0007669"/>
    <property type="project" value="UniProtKB-UniRule"/>
</dbReference>
<dbReference type="GO" id="GO:0004385">
    <property type="term" value="F:guanylate kinase activity"/>
    <property type="evidence" value="ECO:0007669"/>
    <property type="project" value="UniProtKB-UniRule"/>
</dbReference>
<dbReference type="CDD" id="cd00071">
    <property type="entry name" value="GMPK"/>
    <property type="match status" value="1"/>
</dbReference>
<dbReference type="FunFam" id="3.30.63.10:FF:000002">
    <property type="entry name" value="Guanylate kinase 1"/>
    <property type="match status" value="1"/>
</dbReference>
<dbReference type="Gene3D" id="3.30.63.10">
    <property type="entry name" value="Guanylate Kinase phosphate binding domain"/>
    <property type="match status" value="1"/>
</dbReference>
<dbReference type="Gene3D" id="3.40.50.300">
    <property type="entry name" value="P-loop containing nucleotide triphosphate hydrolases"/>
    <property type="match status" value="1"/>
</dbReference>
<dbReference type="HAMAP" id="MF_00328">
    <property type="entry name" value="Guanylate_kinase"/>
    <property type="match status" value="1"/>
</dbReference>
<dbReference type="InterPro" id="IPR008145">
    <property type="entry name" value="GK/Ca_channel_bsu"/>
</dbReference>
<dbReference type="InterPro" id="IPR008144">
    <property type="entry name" value="Guanylate_kin-like_dom"/>
</dbReference>
<dbReference type="InterPro" id="IPR017665">
    <property type="entry name" value="Guanylate_kinase"/>
</dbReference>
<dbReference type="InterPro" id="IPR020590">
    <property type="entry name" value="Guanylate_kinase_CS"/>
</dbReference>
<dbReference type="InterPro" id="IPR027417">
    <property type="entry name" value="P-loop_NTPase"/>
</dbReference>
<dbReference type="NCBIfam" id="TIGR03263">
    <property type="entry name" value="guanyl_kin"/>
    <property type="match status" value="1"/>
</dbReference>
<dbReference type="PANTHER" id="PTHR23117:SF13">
    <property type="entry name" value="GUANYLATE KINASE"/>
    <property type="match status" value="1"/>
</dbReference>
<dbReference type="PANTHER" id="PTHR23117">
    <property type="entry name" value="GUANYLATE KINASE-RELATED"/>
    <property type="match status" value="1"/>
</dbReference>
<dbReference type="Pfam" id="PF00625">
    <property type="entry name" value="Guanylate_kin"/>
    <property type="match status" value="1"/>
</dbReference>
<dbReference type="SMART" id="SM00072">
    <property type="entry name" value="GuKc"/>
    <property type="match status" value="1"/>
</dbReference>
<dbReference type="SUPFAM" id="SSF52540">
    <property type="entry name" value="P-loop containing nucleoside triphosphate hydrolases"/>
    <property type="match status" value="1"/>
</dbReference>
<dbReference type="PROSITE" id="PS00856">
    <property type="entry name" value="GUANYLATE_KINASE_1"/>
    <property type="match status" value="1"/>
</dbReference>
<dbReference type="PROSITE" id="PS50052">
    <property type="entry name" value="GUANYLATE_KINASE_2"/>
    <property type="match status" value="1"/>
</dbReference>
<gene>
    <name type="primary">gmk</name>
    <name type="ordered locus">jhp_0304</name>
</gene>
<feature type="chain" id="PRO_0000170548" description="Guanylate kinase">
    <location>
        <begin position="1"/>
        <end position="206"/>
    </location>
</feature>
<feature type="domain" description="Guanylate kinase-like">
    <location>
        <begin position="5"/>
        <end position="183"/>
    </location>
</feature>
<feature type="binding site" evidence="1">
    <location>
        <begin position="12"/>
        <end position="19"/>
    </location>
    <ligand>
        <name>ATP</name>
        <dbReference type="ChEBI" id="CHEBI:30616"/>
    </ligand>
</feature>
<organism>
    <name type="scientific">Helicobacter pylori (strain J99 / ATCC 700824)</name>
    <name type="common">Campylobacter pylori J99</name>
    <dbReference type="NCBI Taxonomy" id="85963"/>
    <lineage>
        <taxon>Bacteria</taxon>
        <taxon>Pseudomonadati</taxon>
        <taxon>Campylobacterota</taxon>
        <taxon>Epsilonproteobacteria</taxon>
        <taxon>Campylobacterales</taxon>
        <taxon>Helicobacteraceae</taxon>
        <taxon>Helicobacter</taxon>
    </lineage>
</organism>
<accession>Q9ZMB7</accession>
<keyword id="KW-0067">ATP-binding</keyword>
<keyword id="KW-0963">Cytoplasm</keyword>
<keyword id="KW-0418">Kinase</keyword>
<keyword id="KW-0547">Nucleotide-binding</keyword>
<keyword id="KW-0808">Transferase</keyword>
<comment type="function">
    <text evidence="1">Essential for recycling GMP and indirectly, cGMP.</text>
</comment>
<comment type="catalytic activity">
    <reaction>
        <text>GMP + ATP = GDP + ADP</text>
        <dbReference type="Rhea" id="RHEA:20780"/>
        <dbReference type="ChEBI" id="CHEBI:30616"/>
        <dbReference type="ChEBI" id="CHEBI:58115"/>
        <dbReference type="ChEBI" id="CHEBI:58189"/>
        <dbReference type="ChEBI" id="CHEBI:456216"/>
        <dbReference type="EC" id="2.7.4.8"/>
    </reaction>
</comment>
<comment type="subcellular location">
    <subcellularLocation>
        <location evidence="1">Cytoplasm</location>
    </subcellularLocation>
</comment>
<comment type="similarity">
    <text evidence="2">Belongs to the guanylate kinase family.</text>
</comment>